<dbReference type="EMBL" id="CP000675">
    <property type="protein sequence ID" value="ABQ54671.1"/>
    <property type="molecule type" value="Genomic_DNA"/>
</dbReference>
<dbReference type="RefSeq" id="WP_011946325.1">
    <property type="nucleotide sequence ID" value="NZ_JAPMSS010000002.1"/>
</dbReference>
<dbReference type="SMR" id="A5IBC1"/>
<dbReference type="KEGG" id="lpc:LPC_0692"/>
<dbReference type="HOGENOM" id="CLU_045235_1_0_6"/>
<dbReference type="GO" id="GO:0009428">
    <property type="term" value="C:bacterial-type flagellum basal body, distal rod, P ring"/>
    <property type="evidence" value="ECO:0007669"/>
    <property type="project" value="InterPro"/>
</dbReference>
<dbReference type="GO" id="GO:0030288">
    <property type="term" value="C:outer membrane-bounded periplasmic space"/>
    <property type="evidence" value="ECO:0007669"/>
    <property type="project" value="InterPro"/>
</dbReference>
<dbReference type="GO" id="GO:0005198">
    <property type="term" value="F:structural molecule activity"/>
    <property type="evidence" value="ECO:0007669"/>
    <property type="project" value="InterPro"/>
</dbReference>
<dbReference type="GO" id="GO:0071973">
    <property type="term" value="P:bacterial-type flagellum-dependent cell motility"/>
    <property type="evidence" value="ECO:0007669"/>
    <property type="project" value="InterPro"/>
</dbReference>
<dbReference type="HAMAP" id="MF_00416">
    <property type="entry name" value="FlgI"/>
    <property type="match status" value="1"/>
</dbReference>
<dbReference type="InterPro" id="IPR001782">
    <property type="entry name" value="Flag_FlgI"/>
</dbReference>
<dbReference type="NCBIfam" id="NF003676">
    <property type="entry name" value="PRK05303.1"/>
    <property type="match status" value="1"/>
</dbReference>
<dbReference type="PANTHER" id="PTHR30381">
    <property type="entry name" value="FLAGELLAR P-RING PERIPLASMIC PROTEIN FLGI"/>
    <property type="match status" value="1"/>
</dbReference>
<dbReference type="PANTHER" id="PTHR30381:SF0">
    <property type="entry name" value="FLAGELLAR P-RING PROTEIN"/>
    <property type="match status" value="1"/>
</dbReference>
<dbReference type="Pfam" id="PF02119">
    <property type="entry name" value="FlgI"/>
    <property type="match status" value="1"/>
</dbReference>
<dbReference type="PRINTS" id="PR01010">
    <property type="entry name" value="FLGPRINGFLGI"/>
</dbReference>
<organism>
    <name type="scientific">Legionella pneumophila (strain Corby)</name>
    <dbReference type="NCBI Taxonomy" id="400673"/>
    <lineage>
        <taxon>Bacteria</taxon>
        <taxon>Pseudomonadati</taxon>
        <taxon>Pseudomonadota</taxon>
        <taxon>Gammaproteobacteria</taxon>
        <taxon>Legionellales</taxon>
        <taxon>Legionellaceae</taxon>
        <taxon>Legionella</taxon>
    </lineage>
</organism>
<keyword id="KW-0975">Bacterial flagellum</keyword>
<keyword id="KW-0574">Periplasm</keyword>
<keyword id="KW-0732">Signal</keyword>
<reference key="1">
    <citation type="submission" date="2006-11" db="EMBL/GenBank/DDBJ databases">
        <title>Identification and characterization of a new conjugation/ type IVA secretion system (trb/tra) of L. pneumophila Corby localized on a mobile genomic island.</title>
        <authorList>
            <person name="Gloeckner G."/>
            <person name="Albert-Weissenberger C."/>
            <person name="Weinmann E."/>
            <person name="Jacobi S."/>
            <person name="Schunder E."/>
            <person name="Steinert M."/>
            <person name="Buchrieser C."/>
            <person name="Hacker J."/>
            <person name="Heuner K."/>
        </authorList>
    </citation>
    <scope>NUCLEOTIDE SEQUENCE [LARGE SCALE GENOMIC DNA]</scope>
    <source>
        <strain>Corby</strain>
    </source>
</reference>
<gene>
    <name evidence="1" type="primary">flgI</name>
    <name type="ordered locus">LPC_0692</name>
</gene>
<name>FLGI_LEGPC</name>
<protein>
    <recommendedName>
        <fullName evidence="1">Flagellar P-ring protein</fullName>
    </recommendedName>
    <alternativeName>
        <fullName evidence="1">Basal body P-ring protein</fullName>
    </alternativeName>
</protein>
<comment type="function">
    <text evidence="1">Assembles around the rod to form the L-ring and probably protects the motor/basal body from shearing forces during rotation.</text>
</comment>
<comment type="subunit">
    <text evidence="1">The basal body constitutes a major portion of the flagellar organelle and consists of four rings (L,P,S, and M) mounted on a central rod.</text>
</comment>
<comment type="subcellular location">
    <subcellularLocation>
        <location evidence="1">Periplasm</location>
    </subcellularLocation>
    <subcellularLocation>
        <location evidence="1">Bacterial flagellum basal body</location>
    </subcellularLocation>
</comment>
<comment type="similarity">
    <text evidence="1">Belongs to the FlgI family.</text>
</comment>
<feature type="signal peptide" evidence="1">
    <location>
        <begin position="1"/>
        <end position="22"/>
    </location>
</feature>
<feature type="chain" id="PRO_1000050113" description="Flagellar P-ring protein">
    <location>
        <begin position="23"/>
        <end position="367"/>
    </location>
</feature>
<proteinExistence type="inferred from homology"/>
<evidence type="ECO:0000255" key="1">
    <source>
        <dbReference type="HAMAP-Rule" id="MF_00416"/>
    </source>
</evidence>
<sequence length="367" mass="38389">MRRMLVIRWILAIHLIATQVFAERIKDIATLAGVRVNQLVGYGLVVGLSGTGDKTGTKFTEDSFANMLTQLGINVPPGVRLNSKNIAAVMVTANLSSFMKKGQTMDVNISSIGDSKSLLGGTLLLTPLKGADGRVYAMSQGNVVVSGISASGSDGSSVTVNVPSGGRIPNGATIEADIPNPFYYSNSLTYNLHTPDFTTAKRMSDAINELMGPGTAKAIDAGSVVVTAPKKLSQRVDYVSVLENIEFKPGEAMAKIIINARTGTVVISSNVIVKSAAVSHGNLVVSITETPVISQPNAFASGRTVATQQSQVNIQQKNNRAFILPKGTTLKDIVRGINAVGATPADVISILEALQQAGALSATLIVI</sequence>
<accession>A5IBC1</accession>